<sequence>MTEAESKTVVPESVLKKRKREEEWALAKKQELEAAKKQNAEKRKLIFNRAKQYSKEYQEKERELIQLKREAKLKGGFYVDPEAKLLFIIRIRGINAIDPKTKKILQLLRLRQIFNGVFLKVNKATINMLRRVEPYVTYGYPNLKSVKELIYKRGFGKLNHQRTALTDNSIVDQGLGKHGIICVEDLIHEIMTVGPHFKEANNFLWPFQLKAPLGGMKKKRNHYVEGGDAGNRENFINELVRRMN</sequence>
<organism>
    <name type="scientific">Arabidopsis thaliana</name>
    <name type="common">Mouse-ear cress</name>
    <dbReference type="NCBI Taxonomy" id="3702"/>
    <lineage>
        <taxon>Eukaryota</taxon>
        <taxon>Viridiplantae</taxon>
        <taxon>Streptophyta</taxon>
        <taxon>Embryophyta</taxon>
        <taxon>Tracheophyta</taxon>
        <taxon>Spermatophyta</taxon>
        <taxon>Magnoliopsida</taxon>
        <taxon>eudicotyledons</taxon>
        <taxon>Gunneridae</taxon>
        <taxon>Pentapetalae</taxon>
        <taxon>rosids</taxon>
        <taxon>malvids</taxon>
        <taxon>Brassicales</taxon>
        <taxon>Brassicaceae</taxon>
        <taxon>Camelineae</taxon>
        <taxon>Arabidopsis</taxon>
    </lineage>
</organism>
<name>RL74_ARATH</name>
<gene>
    <name type="primary">RPL7D</name>
    <name type="ordered locus">At3g13580</name>
    <name type="ORF">K20M4.2</name>
</gene>
<comment type="similarity">
    <text evidence="2">Belongs to the universal ribosomal protein uL30 family.</text>
</comment>
<protein>
    <recommendedName>
        <fullName evidence="1">Large ribosomal subunit protein uL30w</fullName>
    </recommendedName>
    <alternativeName>
        <fullName>60S ribosomal protein L7-4</fullName>
    </alternativeName>
</protein>
<accession>Q9LHP1</accession>
<dbReference type="EMBL" id="AP002038">
    <property type="protein sequence ID" value="BAB02600.1"/>
    <property type="molecule type" value="Genomic_DNA"/>
</dbReference>
<dbReference type="EMBL" id="CP002686">
    <property type="protein sequence ID" value="AEE75376.1"/>
    <property type="molecule type" value="Genomic_DNA"/>
</dbReference>
<dbReference type="EMBL" id="CP002686">
    <property type="protein sequence ID" value="AEE75377.1"/>
    <property type="molecule type" value="Genomic_DNA"/>
</dbReference>
<dbReference type="EMBL" id="CP002686">
    <property type="protein sequence ID" value="AEE75378.1"/>
    <property type="molecule type" value="Genomic_DNA"/>
</dbReference>
<dbReference type="EMBL" id="CP002686">
    <property type="protein sequence ID" value="ANM64459.1"/>
    <property type="molecule type" value="Genomic_DNA"/>
</dbReference>
<dbReference type="EMBL" id="CP002686">
    <property type="protein sequence ID" value="ANM64460.1"/>
    <property type="molecule type" value="Genomic_DNA"/>
</dbReference>
<dbReference type="EMBL" id="CP002686">
    <property type="protein sequence ID" value="ANM64461.1"/>
    <property type="molecule type" value="Genomic_DNA"/>
</dbReference>
<dbReference type="EMBL" id="CP002686">
    <property type="protein sequence ID" value="ANM64462.1"/>
    <property type="molecule type" value="Genomic_DNA"/>
</dbReference>
<dbReference type="EMBL" id="CP002686">
    <property type="protein sequence ID" value="ANM64463.1"/>
    <property type="molecule type" value="Genomic_DNA"/>
</dbReference>
<dbReference type="EMBL" id="CP002686">
    <property type="protein sequence ID" value="ANM64464.1"/>
    <property type="molecule type" value="Genomic_DNA"/>
</dbReference>
<dbReference type="EMBL" id="AY039900">
    <property type="protein sequence ID" value="AAK64004.1"/>
    <property type="molecule type" value="mRNA"/>
</dbReference>
<dbReference type="EMBL" id="AY056112">
    <property type="protein sequence ID" value="AAL06999.1"/>
    <property type="molecule type" value="mRNA"/>
</dbReference>
<dbReference type="EMBL" id="AY077675">
    <property type="protein sequence ID" value="AAL76153.1"/>
    <property type="molecule type" value="mRNA"/>
</dbReference>
<dbReference type="RefSeq" id="NP_001326486.1">
    <property type="nucleotide sequence ID" value="NM_001338062.1"/>
</dbReference>
<dbReference type="RefSeq" id="NP_001326487.1">
    <property type="nucleotide sequence ID" value="NM_001338061.1"/>
</dbReference>
<dbReference type="RefSeq" id="NP_001326488.1">
    <property type="nucleotide sequence ID" value="NM_001338060.1"/>
</dbReference>
<dbReference type="RefSeq" id="NP_001326489.1">
    <property type="nucleotide sequence ID" value="NM_001338059.1"/>
</dbReference>
<dbReference type="RefSeq" id="NP_001326490.1">
    <property type="nucleotide sequence ID" value="NM_001338058.1"/>
</dbReference>
<dbReference type="RefSeq" id="NP_001326491.1">
    <property type="nucleotide sequence ID" value="NM_001338057.1"/>
</dbReference>
<dbReference type="RefSeq" id="NP_187967.1">
    <property type="nucleotide sequence ID" value="NM_112204.3"/>
</dbReference>
<dbReference type="RefSeq" id="NP_974304.1">
    <property type="nucleotide sequence ID" value="NM_202575.1"/>
</dbReference>
<dbReference type="RefSeq" id="NP_974305.1">
    <property type="nucleotide sequence ID" value="NM_202576.2"/>
</dbReference>
<dbReference type="SMR" id="Q9LHP1"/>
<dbReference type="BioGRID" id="5894">
    <property type="interactions" value="166"/>
</dbReference>
<dbReference type="FunCoup" id="Q9LHP1">
    <property type="interactions" value="4025"/>
</dbReference>
<dbReference type="IntAct" id="Q9LHP1">
    <property type="interactions" value="1"/>
</dbReference>
<dbReference type="STRING" id="3702.Q9LHP1"/>
<dbReference type="PaxDb" id="3702-AT3G13580.3"/>
<dbReference type="ProteomicsDB" id="226892"/>
<dbReference type="EnsemblPlants" id="AT3G13580.1">
    <property type="protein sequence ID" value="AT3G13580.1"/>
    <property type="gene ID" value="AT3G13580"/>
</dbReference>
<dbReference type="EnsemblPlants" id="AT3G13580.2">
    <property type="protein sequence ID" value="AT3G13580.2"/>
    <property type="gene ID" value="AT3G13580"/>
</dbReference>
<dbReference type="EnsemblPlants" id="AT3G13580.3">
    <property type="protein sequence ID" value="AT3G13580.3"/>
    <property type="gene ID" value="AT3G13580"/>
</dbReference>
<dbReference type="EnsemblPlants" id="AT3G13580.4">
    <property type="protein sequence ID" value="AT3G13580.4"/>
    <property type="gene ID" value="AT3G13580"/>
</dbReference>
<dbReference type="EnsemblPlants" id="AT3G13580.5">
    <property type="protein sequence ID" value="AT3G13580.5"/>
    <property type="gene ID" value="AT3G13580"/>
</dbReference>
<dbReference type="EnsemblPlants" id="AT3G13580.6">
    <property type="protein sequence ID" value="AT3G13580.6"/>
    <property type="gene ID" value="AT3G13580"/>
</dbReference>
<dbReference type="EnsemblPlants" id="AT3G13580.7">
    <property type="protein sequence ID" value="AT3G13580.7"/>
    <property type="gene ID" value="AT3G13580"/>
</dbReference>
<dbReference type="EnsemblPlants" id="AT3G13580.8">
    <property type="protein sequence ID" value="AT3G13580.8"/>
    <property type="gene ID" value="AT3G13580"/>
</dbReference>
<dbReference type="EnsemblPlants" id="AT3G13580.9">
    <property type="protein sequence ID" value="AT3G13580.9"/>
    <property type="gene ID" value="AT3G13580"/>
</dbReference>
<dbReference type="GeneID" id="820560"/>
<dbReference type="Gramene" id="AT3G13580.1">
    <property type="protein sequence ID" value="AT3G13580.1"/>
    <property type="gene ID" value="AT3G13580"/>
</dbReference>
<dbReference type="Gramene" id="AT3G13580.2">
    <property type="protein sequence ID" value="AT3G13580.2"/>
    <property type="gene ID" value="AT3G13580"/>
</dbReference>
<dbReference type="Gramene" id="AT3G13580.3">
    <property type="protein sequence ID" value="AT3G13580.3"/>
    <property type="gene ID" value="AT3G13580"/>
</dbReference>
<dbReference type="Gramene" id="AT3G13580.4">
    <property type="protein sequence ID" value="AT3G13580.4"/>
    <property type="gene ID" value="AT3G13580"/>
</dbReference>
<dbReference type="Gramene" id="AT3G13580.5">
    <property type="protein sequence ID" value="AT3G13580.5"/>
    <property type="gene ID" value="AT3G13580"/>
</dbReference>
<dbReference type="Gramene" id="AT3G13580.6">
    <property type="protein sequence ID" value="AT3G13580.6"/>
    <property type="gene ID" value="AT3G13580"/>
</dbReference>
<dbReference type="Gramene" id="AT3G13580.7">
    <property type="protein sequence ID" value="AT3G13580.7"/>
    <property type="gene ID" value="AT3G13580"/>
</dbReference>
<dbReference type="Gramene" id="AT3G13580.8">
    <property type="protein sequence ID" value="AT3G13580.8"/>
    <property type="gene ID" value="AT3G13580"/>
</dbReference>
<dbReference type="Gramene" id="AT3G13580.9">
    <property type="protein sequence ID" value="AT3G13580.9"/>
    <property type="gene ID" value="AT3G13580"/>
</dbReference>
<dbReference type="KEGG" id="ath:AT3G13580"/>
<dbReference type="Araport" id="AT3G13580"/>
<dbReference type="TAIR" id="AT3G13580"/>
<dbReference type="eggNOG" id="KOG3184">
    <property type="taxonomic scope" value="Eukaryota"/>
</dbReference>
<dbReference type="HOGENOM" id="CLU_055156_0_2_1"/>
<dbReference type="InParanoid" id="Q9LHP1"/>
<dbReference type="OMA" id="IVEPWIA"/>
<dbReference type="OrthoDB" id="1088202at2759"/>
<dbReference type="PhylomeDB" id="Q9LHP1"/>
<dbReference type="PRO" id="PR:Q9LHP1"/>
<dbReference type="Proteomes" id="UP000006548">
    <property type="component" value="Chromosome 3"/>
</dbReference>
<dbReference type="ExpressionAtlas" id="Q9LHP1">
    <property type="expression patterns" value="baseline and differential"/>
</dbReference>
<dbReference type="GO" id="GO:0005829">
    <property type="term" value="C:cytosol"/>
    <property type="evidence" value="ECO:0007005"/>
    <property type="project" value="TAIR"/>
</dbReference>
<dbReference type="GO" id="GO:0022625">
    <property type="term" value="C:cytosolic large ribosomal subunit"/>
    <property type="evidence" value="ECO:0007005"/>
    <property type="project" value="TAIR"/>
</dbReference>
<dbReference type="GO" id="GO:0022626">
    <property type="term" value="C:cytosolic ribosome"/>
    <property type="evidence" value="ECO:0007005"/>
    <property type="project" value="TAIR"/>
</dbReference>
<dbReference type="GO" id="GO:0003729">
    <property type="term" value="F:mRNA binding"/>
    <property type="evidence" value="ECO:0000314"/>
    <property type="project" value="TAIR"/>
</dbReference>
<dbReference type="GO" id="GO:0003735">
    <property type="term" value="F:structural constituent of ribosome"/>
    <property type="evidence" value="ECO:0000314"/>
    <property type="project" value="CAFA"/>
</dbReference>
<dbReference type="GO" id="GO:0000463">
    <property type="term" value="P:maturation of LSU-rRNA from tricistronic rRNA transcript (SSU-rRNA, 5.8S rRNA, LSU-rRNA)"/>
    <property type="evidence" value="ECO:0007669"/>
    <property type="project" value="InterPro"/>
</dbReference>
<dbReference type="CDD" id="cd01657">
    <property type="entry name" value="Ribosomal_L7_archeal_euk"/>
    <property type="match status" value="1"/>
</dbReference>
<dbReference type="FunFam" id="3.30.1390.20:FF:000002">
    <property type="entry name" value="60S ribosomal protein L7"/>
    <property type="match status" value="1"/>
</dbReference>
<dbReference type="FunFam" id="3.30.1390.20:FF:000003">
    <property type="entry name" value="60S ribosomal protein L7"/>
    <property type="match status" value="1"/>
</dbReference>
<dbReference type="Gene3D" id="3.30.1390.20">
    <property type="entry name" value="Ribosomal protein L30, ferredoxin-like fold domain"/>
    <property type="match status" value="2"/>
</dbReference>
<dbReference type="InterPro" id="IPR036919">
    <property type="entry name" value="Ribo_uL30_ferredoxin-like_sf"/>
</dbReference>
<dbReference type="InterPro" id="IPR039699">
    <property type="entry name" value="Ribosomal_uL30"/>
</dbReference>
<dbReference type="InterPro" id="IPR018038">
    <property type="entry name" value="Ribosomal_uL30_CS"/>
</dbReference>
<dbReference type="InterPro" id="IPR005998">
    <property type="entry name" value="Ribosomal_uL30_euk"/>
</dbReference>
<dbReference type="InterPro" id="IPR035808">
    <property type="entry name" value="Ribosomal_uL30_euk_arc"/>
</dbReference>
<dbReference type="InterPro" id="IPR016082">
    <property type="entry name" value="Ribosomal_uL30_ferredoxin-like"/>
</dbReference>
<dbReference type="InterPro" id="IPR012988">
    <property type="entry name" value="Ribosomal_uL30_N_euk"/>
</dbReference>
<dbReference type="NCBIfam" id="TIGR01310">
    <property type="entry name" value="uL30_euk"/>
    <property type="match status" value="1"/>
</dbReference>
<dbReference type="PANTHER" id="PTHR11524">
    <property type="entry name" value="60S RIBOSOMAL PROTEIN L7"/>
    <property type="match status" value="1"/>
</dbReference>
<dbReference type="PANTHER" id="PTHR11524:SF39">
    <property type="entry name" value="LARGE RIBOSOMAL SUBUNIT PROTEIN UL30W-RELATED"/>
    <property type="match status" value="1"/>
</dbReference>
<dbReference type="Pfam" id="PF00327">
    <property type="entry name" value="Ribosomal_L30"/>
    <property type="match status" value="1"/>
</dbReference>
<dbReference type="Pfam" id="PF08079">
    <property type="entry name" value="Ribosomal_L30_N"/>
    <property type="match status" value="1"/>
</dbReference>
<dbReference type="SUPFAM" id="SSF55129">
    <property type="entry name" value="Ribosomal protein L30p/L7e"/>
    <property type="match status" value="1"/>
</dbReference>
<dbReference type="PROSITE" id="PS00634">
    <property type="entry name" value="RIBOSOMAL_L30"/>
    <property type="match status" value="1"/>
</dbReference>
<keyword id="KW-1185">Reference proteome</keyword>
<keyword id="KW-0687">Ribonucleoprotein</keyword>
<keyword id="KW-0689">Ribosomal protein</keyword>
<feature type="chain" id="PRO_0000104641" description="Large ribosomal subunit protein uL30w">
    <location>
        <begin position="1"/>
        <end position="244"/>
    </location>
</feature>
<evidence type="ECO:0000303" key="1">
    <source>
    </source>
</evidence>
<evidence type="ECO:0000305" key="2"/>
<proteinExistence type="evidence at transcript level"/>
<reference key="1">
    <citation type="journal article" date="2000" name="DNA Res.">
        <title>Structural analysis of Arabidopsis thaliana chromosome 3. II. Sequence features of the 4,251,695 bp regions covered by 90 P1, TAC and BAC clones.</title>
        <authorList>
            <person name="Kaneko T."/>
            <person name="Katoh T."/>
            <person name="Sato S."/>
            <person name="Nakamura Y."/>
            <person name="Asamizu E."/>
            <person name="Tabata S."/>
        </authorList>
    </citation>
    <scope>NUCLEOTIDE SEQUENCE [LARGE SCALE GENOMIC DNA]</scope>
    <source>
        <strain>cv. Columbia</strain>
    </source>
</reference>
<reference key="2">
    <citation type="journal article" date="2017" name="Plant J.">
        <title>Araport11: a complete reannotation of the Arabidopsis thaliana reference genome.</title>
        <authorList>
            <person name="Cheng C.Y."/>
            <person name="Krishnakumar V."/>
            <person name="Chan A.P."/>
            <person name="Thibaud-Nissen F."/>
            <person name="Schobel S."/>
            <person name="Town C.D."/>
        </authorList>
    </citation>
    <scope>GENOME REANNOTATION</scope>
    <source>
        <strain>cv. Columbia</strain>
    </source>
</reference>
<reference key="3">
    <citation type="journal article" date="2003" name="Science">
        <title>Empirical analysis of transcriptional activity in the Arabidopsis genome.</title>
        <authorList>
            <person name="Yamada K."/>
            <person name="Lim J."/>
            <person name="Dale J.M."/>
            <person name="Chen H."/>
            <person name="Shinn P."/>
            <person name="Palm C.J."/>
            <person name="Southwick A.M."/>
            <person name="Wu H.C."/>
            <person name="Kim C.J."/>
            <person name="Nguyen M."/>
            <person name="Pham P.K."/>
            <person name="Cheuk R.F."/>
            <person name="Karlin-Newmann G."/>
            <person name="Liu S.X."/>
            <person name="Lam B."/>
            <person name="Sakano H."/>
            <person name="Wu T."/>
            <person name="Yu G."/>
            <person name="Miranda M."/>
            <person name="Quach H.L."/>
            <person name="Tripp M."/>
            <person name="Chang C.H."/>
            <person name="Lee J.M."/>
            <person name="Toriumi M.J."/>
            <person name="Chan M.M."/>
            <person name="Tang C.C."/>
            <person name="Onodera C.S."/>
            <person name="Deng J.M."/>
            <person name="Akiyama K."/>
            <person name="Ansari Y."/>
            <person name="Arakawa T."/>
            <person name="Banh J."/>
            <person name="Banno F."/>
            <person name="Bowser L."/>
            <person name="Brooks S.Y."/>
            <person name="Carninci P."/>
            <person name="Chao Q."/>
            <person name="Choy N."/>
            <person name="Enju A."/>
            <person name="Goldsmith A.D."/>
            <person name="Gurjal M."/>
            <person name="Hansen N.F."/>
            <person name="Hayashizaki Y."/>
            <person name="Johnson-Hopson C."/>
            <person name="Hsuan V.W."/>
            <person name="Iida K."/>
            <person name="Karnes M."/>
            <person name="Khan S."/>
            <person name="Koesema E."/>
            <person name="Ishida J."/>
            <person name="Jiang P.X."/>
            <person name="Jones T."/>
            <person name="Kawai J."/>
            <person name="Kamiya A."/>
            <person name="Meyers C."/>
            <person name="Nakajima M."/>
            <person name="Narusaka M."/>
            <person name="Seki M."/>
            <person name="Sakurai T."/>
            <person name="Satou M."/>
            <person name="Tamse R."/>
            <person name="Vaysberg M."/>
            <person name="Wallender E.K."/>
            <person name="Wong C."/>
            <person name="Yamamura Y."/>
            <person name="Yuan S."/>
            <person name="Shinozaki K."/>
            <person name="Davis R.W."/>
            <person name="Theologis A."/>
            <person name="Ecker J.R."/>
        </authorList>
    </citation>
    <scope>NUCLEOTIDE SEQUENCE [LARGE SCALE MRNA]</scope>
    <source>
        <strain>cv. Columbia</strain>
    </source>
</reference>
<reference key="4">
    <citation type="journal article" date="2001" name="Plant Physiol.">
        <title>The organization of cytoplasmic ribosomal protein genes in the Arabidopsis genome.</title>
        <authorList>
            <person name="Barakat A."/>
            <person name="Szick-Miranda K."/>
            <person name="Chang I.-F."/>
            <person name="Guyot R."/>
            <person name="Blanc G."/>
            <person name="Cooke R."/>
            <person name="Delseny M."/>
            <person name="Bailey-Serres J."/>
        </authorList>
    </citation>
    <scope>GENE FAMILY ORGANIZATION</scope>
    <scope>NOMENCLATURE</scope>
</reference>
<reference key="5">
    <citation type="journal article" date="2023" name="Plant Cell">
        <title>An updated nomenclature for plant ribosomal protein genes.</title>
        <authorList>
            <person name="Scarpin M.R."/>
            <person name="Busche M."/>
            <person name="Martinez R.E."/>
            <person name="Harper L.C."/>
            <person name="Reiser L."/>
            <person name="Szakonyi D."/>
            <person name="Merchante C."/>
            <person name="Lan T."/>
            <person name="Xiong W."/>
            <person name="Mo B."/>
            <person name="Tang G."/>
            <person name="Chen X."/>
            <person name="Bailey-Serres J."/>
            <person name="Browning K.S."/>
            <person name="Brunkard J.O."/>
        </authorList>
    </citation>
    <scope>NOMENCLATURE</scope>
</reference>